<feature type="signal peptide" evidence="2">
    <location>
        <begin position="1"/>
        <end position="20"/>
    </location>
</feature>
<feature type="propeptide" id="PRO_0000412829" evidence="1">
    <location>
        <begin position="21"/>
        <end position="105"/>
    </location>
</feature>
<feature type="peptide" id="PRO_0000412830" description="Cholecystokinin-8">
    <location>
        <begin position="106"/>
        <end position="113"/>
    </location>
</feature>
<feature type="propeptide" id="PRO_0000412831" evidence="1">
    <location>
        <begin position="114"/>
        <end position="125"/>
    </location>
</feature>
<feature type="modified residue" description="Sulfotyrosine" evidence="1">
    <location>
        <position position="107"/>
    </location>
</feature>
<feature type="modified residue" description="Phenylalanine amide" evidence="1">
    <location>
        <position position="113"/>
    </location>
</feature>
<reference key="1">
    <citation type="submission" date="2002-06" db="EMBL/GenBank/DDBJ databases">
        <title>Gastrin and CCK in the Burmese python.</title>
        <authorList>
            <person name="Jonson L."/>
            <person name="Wang T."/>
            <person name="Johnsen A.H."/>
        </authorList>
    </citation>
    <scope>NUCLEOTIDE SEQUENCE [MRNA]</scope>
</reference>
<proteinExistence type="evidence at transcript level"/>
<organism>
    <name type="scientific">Python molurus</name>
    <name type="common">Indian python</name>
    <dbReference type="NCBI Taxonomy" id="51750"/>
    <lineage>
        <taxon>Eukaryota</taxon>
        <taxon>Metazoa</taxon>
        <taxon>Chordata</taxon>
        <taxon>Craniata</taxon>
        <taxon>Vertebrata</taxon>
        <taxon>Euteleostomi</taxon>
        <taxon>Lepidosauria</taxon>
        <taxon>Squamata</taxon>
        <taxon>Bifurcata</taxon>
        <taxon>Unidentata</taxon>
        <taxon>Episquamata</taxon>
        <taxon>Toxicofera</taxon>
        <taxon>Serpentes</taxon>
        <taxon>Henophidia</taxon>
        <taxon>Pythonidae</taxon>
        <taxon>Python</taxon>
    </lineage>
</organism>
<accession>Q8JHB9</accession>
<sequence length="125" mass="13822">MYSGICSCLFLAVLSSSSLGQQISGSQHANPAVTDLEQSLLENHRHTRIPTSGRPIQLVDGSIDQKANLGALLAKYLQQARRGSTGKASVMGLQNFDPTHRIKDRDYMGWMDFGRRSAEEYEYSS</sequence>
<gene>
    <name type="primary">CCK</name>
</gene>
<name>CCK_PYTMO</name>
<keyword id="KW-0027">Amidation</keyword>
<keyword id="KW-0165">Cleavage on pair of basic residues</keyword>
<keyword id="KW-0372">Hormone</keyword>
<keyword id="KW-0382">Hypotensive agent</keyword>
<keyword id="KW-0964">Secreted</keyword>
<keyword id="KW-0732">Signal</keyword>
<keyword id="KW-0765">Sulfation</keyword>
<comment type="function">
    <text evidence="1">Hypotensive neuropeptide that binds cholecystokinin receptors (CCKAR).</text>
</comment>
<comment type="subcellular location">
    <subcellularLocation>
        <location evidence="1">Secreted</location>
    </subcellularLocation>
</comment>
<comment type="similarity">
    <text evidence="3">Belongs to the gastrin/cholecystokinin family.</text>
</comment>
<protein>
    <recommendedName>
        <fullName>Cholecystokinin-8</fullName>
        <shortName>CCK</shortName>
    </recommendedName>
</protein>
<evidence type="ECO:0000250" key="1"/>
<evidence type="ECO:0000255" key="2"/>
<evidence type="ECO:0000305" key="3"/>
<dbReference type="EMBL" id="AF521639">
    <property type="protein sequence ID" value="AAM77662.1"/>
    <property type="molecule type" value="mRNA"/>
</dbReference>
<dbReference type="GO" id="GO:0030424">
    <property type="term" value="C:axon"/>
    <property type="evidence" value="ECO:0007669"/>
    <property type="project" value="TreeGrafter"/>
</dbReference>
<dbReference type="GO" id="GO:0005615">
    <property type="term" value="C:extracellular space"/>
    <property type="evidence" value="ECO:0007669"/>
    <property type="project" value="TreeGrafter"/>
</dbReference>
<dbReference type="GO" id="GO:0005184">
    <property type="term" value="F:neuropeptide hormone activity"/>
    <property type="evidence" value="ECO:0007669"/>
    <property type="project" value="InterPro"/>
</dbReference>
<dbReference type="GO" id="GO:0007586">
    <property type="term" value="P:digestion"/>
    <property type="evidence" value="ECO:0007669"/>
    <property type="project" value="InterPro"/>
</dbReference>
<dbReference type="GO" id="GO:0008217">
    <property type="term" value="P:regulation of blood pressure"/>
    <property type="evidence" value="ECO:0007669"/>
    <property type="project" value="UniProtKB-KW"/>
</dbReference>
<dbReference type="InterPro" id="IPR015499">
    <property type="entry name" value="CCK-like"/>
</dbReference>
<dbReference type="InterPro" id="IPR001651">
    <property type="entry name" value="Gastrin/CCK"/>
</dbReference>
<dbReference type="InterPro" id="IPR013152">
    <property type="entry name" value="Gastrin/cholecystokinin_CS"/>
</dbReference>
<dbReference type="PANTHER" id="PTHR10786">
    <property type="entry name" value="CHOLECYSTOKININ"/>
    <property type="match status" value="1"/>
</dbReference>
<dbReference type="PANTHER" id="PTHR10786:SF0">
    <property type="entry name" value="CHOLECYSTOKININ"/>
    <property type="match status" value="1"/>
</dbReference>
<dbReference type="Pfam" id="PF00918">
    <property type="entry name" value="Gastrin"/>
    <property type="match status" value="1"/>
</dbReference>
<dbReference type="SMART" id="SM00029">
    <property type="entry name" value="GASTRIN"/>
    <property type="match status" value="1"/>
</dbReference>
<dbReference type="PROSITE" id="PS00259">
    <property type="entry name" value="GASTRIN"/>
    <property type="match status" value="1"/>
</dbReference>